<proteinExistence type="inferred from homology"/>
<sequence>MAQCNLFYQYPITPILEGHVRNILICTEKDVEKLQSQSSLRLREKIDQGHRDKLLRMRLKTELDALQKKMQKDSDVLNSHLKAIEDALLFTNDGEVNVETKADAQLIPKSPEKLEKFNQVAITPLDPFIRFTDDFRGEMINTFFNNAQMWNFTFGSWFYKLKRVFYNEPGLRRALKLTNVDSLTISKELLAVTVNALEQATVYPIFGSEMSDLEAALCILAAFYSTYENSQIDERTTLVDVITLLPVIFRLLGSEITALKNVSPSGTYFGFNDPSCMKFFVPMRKGKHYAENTFGNHVLIKMLLGRGVMQKIPGEKISQNFDVEARLHGAIKNDVLVYWTYQLMRPKLGNNVPIFIHDQHYLRSGLVAIESLFLLWRI</sequence>
<organism>
    <name type="scientific">Human herpesvirus 6A (strain GS)</name>
    <name type="common">HHV-6 variant A</name>
    <name type="synonym">Human B lymphotropic virus</name>
    <dbReference type="NCBI Taxonomy" id="10369"/>
    <lineage>
        <taxon>Viruses</taxon>
        <taxon>Duplodnaviria</taxon>
        <taxon>Heunggongvirae</taxon>
        <taxon>Peploviricota</taxon>
        <taxon>Herviviricetes</taxon>
        <taxon>Herpesvirales</taxon>
        <taxon>Orthoherpesviridae</taxon>
        <taxon>Betaherpesvirinae</taxon>
        <taxon>Roseolovirus</taxon>
        <taxon>Roseolovirus humanbeta6a</taxon>
        <taxon>Human betaherpesvirus 6A</taxon>
    </lineage>
</organism>
<organismHost>
    <name type="scientific">Homo sapiens</name>
    <name type="common">Human</name>
    <dbReference type="NCBI Taxonomy" id="9606"/>
</organismHost>
<evidence type="ECO:0000250" key="1"/>
<evidence type="ECO:0000305" key="2"/>
<dbReference type="EMBL" id="S57509">
    <property type="protein sequence ID" value="AAB19777.1"/>
    <property type="molecule type" value="Genomic_DNA"/>
</dbReference>
<dbReference type="PIR" id="F56653">
    <property type="entry name" value="F56653"/>
</dbReference>
<dbReference type="SMR" id="P52536"/>
<dbReference type="GO" id="GO:0042025">
    <property type="term" value="C:host cell nucleus"/>
    <property type="evidence" value="ECO:0007669"/>
    <property type="project" value="UniProtKB-SubCell"/>
</dbReference>
<dbReference type="GO" id="GO:0019028">
    <property type="term" value="C:viral capsid"/>
    <property type="evidence" value="ECO:0007669"/>
    <property type="project" value="UniProtKB-KW"/>
</dbReference>
<dbReference type="GO" id="GO:0019072">
    <property type="term" value="P:viral genome packaging"/>
    <property type="evidence" value="ECO:0007669"/>
    <property type="project" value="InterPro"/>
</dbReference>
<dbReference type="InterPro" id="IPR002493">
    <property type="entry name" value="Herpes_UL25"/>
</dbReference>
<dbReference type="Pfam" id="PF01499">
    <property type="entry name" value="Herpes_UL25"/>
    <property type="match status" value="1"/>
</dbReference>
<keyword id="KW-0167">Capsid protein</keyword>
<keyword id="KW-1048">Host nucleus</keyword>
<keyword id="KW-0231">Viral genome packaging</keyword>
<keyword id="KW-1188">Viral release from host cell</keyword>
<keyword id="KW-0946">Virion</keyword>
<protein>
    <recommendedName>
        <fullName>Virion-packaging protein UL25 homolog</fullName>
    </recommendedName>
</protein>
<name>UL25_HHV6G</name>
<accession>P52536</accession>
<comment type="function">
    <text evidence="1">Plays a role at the late stage in the encapsidation of viral DNA, assuring correct genome cleavage and presumably stabilizing capsids that contain full-lengtht viral genomes. Located on the external vertices of the T=16 icosahedric capsid, may bind together the tegument and the capsid through interaction with large tegument protein U31 (By similarity).</text>
</comment>
<comment type="subunit">
    <text evidence="1">Heterodimerizes with packaging protein U64. Interacts with major capsid protein U57 and triplex capsid protein U29, essentially at the pentamer vertices. May interact with large tegument protein U31 (By similarity).</text>
</comment>
<comment type="subcellular location">
    <subcellularLocation>
        <location>Virion</location>
    </subcellularLocation>
    <subcellularLocation>
        <location evidence="1">Host nucleus</location>
    </subcellularLocation>
</comment>
<comment type="similarity">
    <text evidence="2">Belongs to the herpesviridae UL25 family.</text>
</comment>
<feature type="chain" id="PRO_0000115997" description="Virion-packaging protein UL25 homolog">
    <location>
        <begin position="1"/>
        <end position="378" status="greater than"/>
    </location>
</feature>
<feature type="non-terminal residue">
    <location>
        <position position="378"/>
    </location>
</feature>
<gene>
    <name type="primary">U50</name>
    <name type="synonym">LF3</name>
</gene>
<reference key="1">
    <citation type="journal article" date="1991" name="J. Virol.">
        <title>Identification of the human herpesvirus 6 glycoprotein H and putative large tegument protein genes.</title>
        <authorList>
            <person name="Josephs S.F."/>
            <person name="Ablashi D.V."/>
            <person name="Salahuddin S.Z."/>
            <person name="Jagodzinski L.L."/>
            <person name="Wong-Staal F."/>
            <person name="Gallo R.C."/>
        </authorList>
    </citation>
    <scope>NUCLEOTIDE SEQUENCE [GENOMIC DNA]</scope>
</reference>